<protein>
    <recommendedName>
        <fullName>Frataxin, mitochondrial</fullName>
        <shortName>Fxn</shortName>
        <ecNumber>1.16.3.1</ecNumber>
    </recommendedName>
</protein>
<comment type="function">
    <text evidence="3 4">Promotes the biosynthesis of heme as well as the assembly and repair of iron-sulfur clusters by delivering Fe(2+) to proteins involved in these pathways (PubMed:17092311). May play a role in the protection against iron-catalyzed oxidative stress through its ability to catalyze the oxidation of Fe(2+) to Fe(3+) (PubMed:17092311). May be able to store large amounts of the metal in the form of a ferrihydrite mineral by oligomerization (PubMed:17092311). Binds to the mitochondrial cysteine desulfurase NIFS1 and increases its activity (PubMed:22511606).</text>
</comment>
<comment type="catalytic activity">
    <reaction>
        <text>4 Fe(2+) + O2 + 4 H(+) = 4 Fe(3+) + 2 H2O</text>
        <dbReference type="Rhea" id="RHEA:11148"/>
        <dbReference type="ChEBI" id="CHEBI:15377"/>
        <dbReference type="ChEBI" id="CHEBI:15378"/>
        <dbReference type="ChEBI" id="CHEBI:15379"/>
        <dbReference type="ChEBI" id="CHEBI:29033"/>
        <dbReference type="ChEBI" id="CHEBI:29034"/>
        <dbReference type="EC" id="1.16.3.1"/>
    </reaction>
</comment>
<comment type="subunit">
    <text evidence="1 4">Monomer. Oligomer (By similarity). Interacts with NIFS1 (PubMed:22511606).</text>
</comment>
<comment type="subcellular location">
    <subcellularLocation>
        <location evidence="3">Mitochondrion</location>
    </subcellularLocation>
</comment>
<comment type="similarity">
    <text evidence="5">Belongs to the frataxin family.</text>
</comment>
<comment type="sequence caution" evidence="5">
    <conflict type="erroneous gene model prediction">
        <sequence resource="EMBL-CDS" id="AAD14452"/>
    </conflict>
</comment>
<comment type="sequence caution" evidence="5">
    <conflict type="erroneous gene model prediction">
        <sequence resource="EMBL-CDS" id="CAB77809"/>
    </conflict>
</comment>
<accession>Q9ZR07</accession>
<accession>Q6GKV0</accession>
<reference key="1">
    <citation type="journal article" date="2004" name="FEBS Lett.">
        <title>Functional and molecular characterization of the frataxin homolog from Arabidopsis thaliana.</title>
        <authorList>
            <person name="Busi M.V."/>
            <person name="Zabaleta E.J."/>
            <person name="Araya A."/>
            <person name="Gomez-Casati D.F."/>
        </authorList>
    </citation>
    <scope>NUCLEOTIDE SEQUENCE [MRNA]</scope>
</reference>
<reference key="2">
    <citation type="journal article" date="1999" name="Nature">
        <title>Sequence and analysis of chromosome 4 of the plant Arabidopsis thaliana.</title>
        <authorList>
            <person name="Mayer K.F.X."/>
            <person name="Schueller C."/>
            <person name="Wambutt R."/>
            <person name="Murphy G."/>
            <person name="Volckaert G."/>
            <person name="Pohl T."/>
            <person name="Duesterhoeft A."/>
            <person name="Stiekema W."/>
            <person name="Entian K.-D."/>
            <person name="Terryn N."/>
            <person name="Harris B."/>
            <person name="Ansorge W."/>
            <person name="Brandt P."/>
            <person name="Grivell L.A."/>
            <person name="Rieger M."/>
            <person name="Weichselgartner M."/>
            <person name="de Simone V."/>
            <person name="Obermaier B."/>
            <person name="Mache R."/>
            <person name="Mueller M."/>
            <person name="Kreis M."/>
            <person name="Delseny M."/>
            <person name="Puigdomenech P."/>
            <person name="Watson M."/>
            <person name="Schmidtheini T."/>
            <person name="Reichert B."/>
            <person name="Portetelle D."/>
            <person name="Perez-Alonso M."/>
            <person name="Boutry M."/>
            <person name="Bancroft I."/>
            <person name="Vos P."/>
            <person name="Hoheisel J."/>
            <person name="Zimmermann W."/>
            <person name="Wedler H."/>
            <person name="Ridley P."/>
            <person name="Langham S.-A."/>
            <person name="McCullagh B."/>
            <person name="Bilham L."/>
            <person name="Robben J."/>
            <person name="van der Schueren J."/>
            <person name="Grymonprez B."/>
            <person name="Chuang Y.-J."/>
            <person name="Vandenbussche F."/>
            <person name="Braeken M."/>
            <person name="Weltjens I."/>
            <person name="Voet M."/>
            <person name="Bastiaens I."/>
            <person name="Aert R."/>
            <person name="Defoor E."/>
            <person name="Weitzenegger T."/>
            <person name="Bothe G."/>
            <person name="Ramsperger U."/>
            <person name="Hilbert H."/>
            <person name="Braun M."/>
            <person name="Holzer E."/>
            <person name="Brandt A."/>
            <person name="Peters S."/>
            <person name="van Staveren M."/>
            <person name="Dirkse W."/>
            <person name="Mooijman P."/>
            <person name="Klein Lankhorst R."/>
            <person name="Rose M."/>
            <person name="Hauf J."/>
            <person name="Koetter P."/>
            <person name="Berneiser S."/>
            <person name="Hempel S."/>
            <person name="Feldpausch M."/>
            <person name="Lamberth S."/>
            <person name="Van den Daele H."/>
            <person name="De Keyser A."/>
            <person name="Buysshaert C."/>
            <person name="Gielen J."/>
            <person name="Villarroel R."/>
            <person name="De Clercq R."/>
            <person name="van Montagu M."/>
            <person name="Rogers J."/>
            <person name="Cronin A."/>
            <person name="Quail M.A."/>
            <person name="Bray-Allen S."/>
            <person name="Clark L."/>
            <person name="Doggett J."/>
            <person name="Hall S."/>
            <person name="Kay M."/>
            <person name="Lennard N."/>
            <person name="McLay K."/>
            <person name="Mayes R."/>
            <person name="Pettett A."/>
            <person name="Rajandream M.A."/>
            <person name="Lyne M."/>
            <person name="Benes V."/>
            <person name="Rechmann S."/>
            <person name="Borkova D."/>
            <person name="Bloecker H."/>
            <person name="Scharfe M."/>
            <person name="Grimm M."/>
            <person name="Loehnert T.-H."/>
            <person name="Dose S."/>
            <person name="de Haan M."/>
            <person name="Maarse A.C."/>
            <person name="Schaefer M."/>
            <person name="Mueller-Auer S."/>
            <person name="Gabel C."/>
            <person name="Fuchs M."/>
            <person name="Fartmann B."/>
            <person name="Granderath K."/>
            <person name="Dauner D."/>
            <person name="Herzl A."/>
            <person name="Neumann S."/>
            <person name="Argiriou A."/>
            <person name="Vitale D."/>
            <person name="Liguori R."/>
            <person name="Piravandi E."/>
            <person name="Massenet O."/>
            <person name="Quigley F."/>
            <person name="Clabauld G."/>
            <person name="Muendlein A."/>
            <person name="Felber R."/>
            <person name="Schnabl S."/>
            <person name="Hiller R."/>
            <person name="Schmidt W."/>
            <person name="Lecharny A."/>
            <person name="Aubourg S."/>
            <person name="Chefdor F."/>
            <person name="Cooke R."/>
            <person name="Berger C."/>
            <person name="Monfort A."/>
            <person name="Casacuberta E."/>
            <person name="Gibbons T."/>
            <person name="Weber N."/>
            <person name="Vandenbol M."/>
            <person name="Bargues M."/>
            <person name="Terol J."/>
            <person name="Torres A."/>
            <person name="Perez-Perez A."/>
            <person name="Purnelle B."/>
            <person name="Bent E."/>
            <person name="Johnson S."/>
            <person name="Tacon D."/>
            <person name="Jesse T."/>
            <person name="Heijnen L."/>
            <person name="Schwarz S."/>
            <person name="Scholler P."/>
            <person name="Heber S."/>
            <person name="Francs P."/>
            <person name="Bielke C."/>
            <person name="Frishman D."/>
            <person name="Haase D."/>
            <person name="Lemcke K."/>
            <person name="Mewes H.-W."/>
            <person name="Stocker S."/>
            <person name="Zaccaria P."/>
            <person name="Bevan M."/>
            <person name="Wilson R.K."/>
            <person name="de la Bastide M."/>
            <person name="Habermann K."/>
            <person name="Parnell L."/>
            <person name="Dedhia N."/>
            <person name="Gnoj L."/>
            <person name="Schutz K."/>
            <person name="Huang E."/>
            <person name="Spiegel L."/>
            <person name="Sekhon M."/>
            <person name="Murray J."/>
            <person name="Sheet P."/>
            <person name="Cordes M."/>
            <person name="Abu-Threideh J."/>
            <person name="Stoneking T."/>
            <person name="Kalicki J."/>
            <person name="Graves T."/>
            <person name="Harmon G."/>
            <person name="Edwards J."/>
            <person name="Latreille P."/>
            <person name="Courtney L."/>
            <person name="Cloud J."/>
            <person name="Abbott A."/>
            <person name="Scott K."/>
            <person name="Johnson D."/>
            <person name="Minx P."/>
            <person name="Bentley D."/>
            <person name="Fulton B."/>
            <person name="Miller N."/>
            <person name="Greco T."/>
            <person name="Kemp K."/>
            <person name="Kramer J."/>
            <person name="Fulton L."/>
            <person name="Mardis E."/>
            <person name="Dante M."/>
            <person name="Pepin K."/>
            <person name="Hillier L.W."/>
            <person name="Nelson J."/>
            <person name="Spieth J."/>
            <person name="Ryan E."/>
            <person name="Andrews S."/>
            <person name="Geisel C."/>
            <person name="Layman D."/>
            <person name="Du H."/>
            <person name="Ali J."/>
            <person name="Berghoff A."/>
            <person name="Jones K."/>
            <person name="Drone K."/>
            <person name="Cotton M."/>
            <person name="Joshu C."/>
            <person name="Antonoiu B."/>
            <person name="Zidanic M."/>
            <person name="Strong C."/>
            <person name="Sun H."/>
            <person name="Lamar B."/>
            <person name="Yordan C."/>
            <person name="Ma P."/>
            <person name="Zhong J."/>
            <person name="Preston R."/>
            <person name="Vil D."/>
            <person name="Shekher M."/>
            <person name="Matero A."/>
            <person name="Shah R."/>
            <person name="Swaby I.K."/>
            <person name="O'Shaughnessy A."/>
            <person name="Rodriguez M."/>
            <person name="Hoffman J."/>
            <person name="Till S."/>
            <person name="Granat S."/>
            <person name="Shohdy N."/>
            <person name="Hasegawa A."/>
            <person name="Hameed A."/>
            <person name="Lodhi M."/>
            <person name="Johnson A."/>
            <person name="Chen E."/>
            <person name="Marra M.A."/>
            <person name="Martienssen R."/>
            <person name="McCombie W.R."/>
        </authorList>
    </citation>
    <scope>NUCLEOTIDE SEQUENCE [LARGE SCALE GENOMIC DNA]</scope>
    <source>
        <strain>cv. Columbia</strain>
    </source>
</reference>
<reference key="3">
    <citation type="journal article" date="2017" name="Plant J.">
        <title>Araport11: a complete reannotation of the Arabidopsis thaliana reference genome.</title>
        <authorList>
            <person name="Cheng C.Y."/>
            <person name="Krishnakumar V."/>
            <person name="Chan A.P."/>
            <person name="Thibaud-Nissen F."/>
            <person name="Schobel S."/>
            <person name="Town C.D."/>
        </authorList>
    </citation>
    <scope>GENOME REANNOTATION</scope>
    <source>
        <strain>cv. Columbia</strain>
    </source>
</reference>
<reference key="4">
    <citation type="submission" date="2004-06" db="EMBL/GenBank/DDBJ databases">
        <title>Arabidopsis ORF clones.</title>
        <authorList>
            <person name="Cheuk R.F."/>
            <person name="Chen H."/>
            <person name="Kim C.J."/>
            <person name="Shinn P."/>
            <person name="Ecker J.R."/>
        </authorList>
    </citation>
    <scope>NUCLEOTIDE SEQUENCE [LARGE SCALE MRNA]</scope>
    <source>
        <strain>cv. Columbia</strain>
    </source>
</reference>
<reference key="5">
    <citation type="submission" date="2004-09" db="EMBL/GenBank/DDBJ databases">
        <title>Large-scale analysis of RIKEN Arabidopsis full-length (RAFL) cDNAs.</title>
        <authorList>
            <person name="Totoki Y."/>
            <person name="Seki M."/>
            <person name="Ishida J."/>
            <person name="Nakajima M."/>
            <person name="Enju A."/>
            <person name="Kamiya A."/>
            <person name="Narusaka M."/>
            <person name="Shin-i T."/>
            <person name="Nakagawa M."/>
            <person name="Sakamoto N."/>
            <person name="Oishi K."/>
            <person name="Kohara Y."/>
            <person name="Kobayashi M."/>
            <person name="Toyoda A."/>
            <person name="Sakaki Y."/>
            <person name="Sakurai T."/>
            <person name="Iida K."/>
            <person name="Akiyama K."/>
            <person name="Satou M."/>
            <person name="Toyoda T."/>
            <person name="Konagaya A."/>
            <person name="Carninci P."/>
            <person name="Kawai J."/>
            <person name="Hayashizaki Y."/>
            <person name="Shinozaki K."/>
        </authorList>
    </citation>
    <scope>NUCLEOTIDE SEQUENCE [LARGE SCALE MRNA]</scope>
    <source>
        <strain>cv. Columbia</strain>
    </source>
</reference>
<reference key="6">
    <citation type="journal article" date="2006" name="Plant J.">
        <title>Deficiency of Arabidopsis thaliana frataxin alters activity of mitochondrial Fe-S proteins and induces oxidative stress.</title>
        <authorList>
            <person name="Busi M.V."/>
            <person name="Maliandi M.V."/>
            <person name="Valdez H."/>
            <person name="Clemente M."/>
            <person name="Zabaleta E.J."/>
            <person name="Araya A."/>
            <person name="Gomez-Casati D.F."/>
        </authorList>
    </citation>
    <scope>FUNCTION</scope>
    <scope>SUBCELLULAR LOCATION</scope>
</reference>
<reference key="7">
    <citation type="journal article" date="2012" name="Mol. Plant">
        <title>Structural and functional studies of the mitochondrial cysteine desulfurase from Arabidopsis thaliana.</title>
        <authorList>
            <person name="Turowski V.R."/>
            <person name="Busi M.V."/>
            <person name="Gomez-Casati D.F."/>
        </authorList>
    </citation>
    <scope>FUNCTION</scope>
    <scope>INTERACTION WITH NIFS1</scope>
</reference>
<proteinExistence type="evidence at protein level"/>
<sequence>MATASRFLLRKLPRFLKLSPTLLRSNGVRVSSNLIQDSIEPLDSFWRIGSRIRHDSLTTRSFSSQGPASVDYSSVLQEEEFHKLANFTINHLLEKIEDYGDNVQIDGFDIDYGNEVLTLKLGSLGTYVLNKQTPNRQIWMSSPVSGPSRFDWDRDANAWIYRRTEAKLHKLLEEELENLCGEPIQLS</sequence>
<organism>
    <name type="scientific">Arabidopsis thaliana</name>
    <name type="common">Mouse-ear cress</name>
    <dbReference type="NCBI Taxonomy" id="3702"/>
    <lineage>
        <taxon>Eukaryota</taxon>
        <taxon>Viridiplantae</taxon>
        <taxon>Streptophyta</taxon>
        <taxon>Embryophyta</taxon>
        <taxon>Tracheophyta</taxon>
        <taxon>Spermatophyta</taxon>
        <taxon>Magnoliopsida</taxon>
        <taxon>eudicotyledons</taxon>
        <taxon>Gunneridae</taxon>
        <taxon>Pentapetalae</taxon>
        <taxon>rosids</taxon>
        <taxon>malvids</taxon>
        <taxon>Brassicales</taxon>
        <taxon>Brassicaceae</taxon>
        <taxon>Camelineae</taxon>
        <taxon>Arabidopsis</taxon>
    </lineage>
</organism>
<evidence type="ECO:0000250" key="1"/>
<evidence type="ECO:0000255" key="2"/>
<evidence type="ECO:0000269" key="3">
    <source>
    </source>
</evidence>
<evidence type="ECO:0000269" key="4">
    <source>
    </source>
</evidence>
<evidence type="ECO:0000305" key="5"/>
<gene>
    <name type="primary">FH</name>
    <name type="ordered locus">At4g03240</name>
    <name type="ORF">F4C21.17</name>
</gene>
<dbReference type="EC" id="1.16.3.1"/>
<dbReference type="EMBL" id="AY649366">
    <property type="protein sequence ID" value="AAU11485.1"/>
    <property type="molecule type" value="mRNA"/>
</dbReference>
<dbReference type="EMBL" id="AC005275">
    <property type="protein sequence ID" value="AAD14452.1"/>
    <property type="status" value="ALT_SEQ"/>
    <property type="molecule type" value="Genomic_DNA"/>
</dbReference>
<dbReference type="EMBL" id="AL161496">
    <property type="protein sequence ID" value="CAB77809.1"/>
    <property type="status" value="ALT_SEQ"/>
    <property type="molecule type" value="Genomic_DNA"/>
</dbReference>
<dbReference type="EMBL" id="CP002687">
    <property type="protein sequence ID" value="AEE82296.1"/>
    <property type="molecule type" value="Genomic_DNA"/>
</dbReference>
<dbReference type="EMBL" id="BT014964">
    <property type="protein sequence ID" value="AAT47815.1"/>
    <property type="molecule type" value="mRNA"/>
</dbReference>
<dbReference type="EMBL" id="AK176448">
    <property type="protein sequence ID" value="BAD44211.1"/>
    <property type="molecule type" value="mRNA"/>
</dbReference>
<dbReference type="EMBL" id="AK176831">
    <property type="protein sequence ID" value="BAD44594.1"/>
    <property type="molecule type" value="mRNA"/>
</dbReference>
<dbReference type="PIR" id="B85041">
    <property type="entry name" value="B85041"/>
</dbReference>
<dbReference type="RefSeq" id="NP_192233.2">
    <property type="nucleotide sequence ID" value="NM_116562.4"/>
</dbReference>
<dbReference type="PDB" id="9JB5">
    <property type="method" value="X-ray"/>
    <property type="resolution" value="2.80 A"/>
    <property type="chains" value="A/B=77-187"/>
</dbReference>
<dbReference type="PDBsum" id="9JB5"/>
<dbReference type="SMR" id="Q9ZR07"/>
<dbReference type="BioGRID" id="13304">
    <property type="interactions" value="1"/>
</dbReference>
<dbReference type="FunCoup" id="Q9ZR07">
    <property type="interactions" value="2201"/>
</dbReference>
<dbReference type="STRING" id="3702.Q9ZR07"/>
<dbReference type="PaxDb" id="3702-AT4G03240.1"/>
<dbReference type="ProteomicsDB" id="230528"/>
<dbReference type="EnsemblPlants" id="AT4G03240.1">
    <property type="protein sequence ID" value="AT4G03240.1"/>
    <property type="gene ID" value="AT4G03240"/>
</dbReference>
<dbReference type="GeneID" id="828013"/>
<dbReference type="Gramene" id="AT4G03240.1">
    <property type="protein sequence ID" value="AT4G03240.1"/>
    <property type="gene ID" value="AT4G03240"/>
</dbReference>
<dbReference type="KEGG" id="ath:AT4G03240"/>
<dbReference type="Araport" id="AT4G03240"/>
<dbReference type="TAIR" id="AT4G03240">
    <property type="gene designation" value="FH"/>
</dbReference>
<dbReference type="eggNOG" id="KOG3413">
    <property type="taxonomic scope" value="Eukaryota"/>
</dbReference>
<dbReference type="HOGENOM" id="CLU_080880_2_0_1"/>
<dbReference type="InParanoid" id="Q9ZR07"/>
<dbReference type="OMA" id="QGWIYRR"/>
<dbReference type="OrthoDB" id="1897642at2759"/>
<dbReference type="PhylomeDB" id="Q9ZR07"/>
<dbReference type="BioCyc" id="ARA:AT4G03240-MONOMER"/>
<dbReference type="BRENDA" id="4.99.1.1">
    <property type="organism ID" value="399"/>
</dbReference>
<dbReference type="SABIO-RK" id="Q9ZR07"/>
<dbReference type="PRO" id="PR:Q9ZR07"/>
<dbReference type="Proteomes" id="UP000006548">
    <property type="component" value="Chromosome 4"/>
</dbReference>
<dbReference type="ExpressionAtlas" id="Q9ZR07">
    <property type="expression patterns" value="baseline and differential"/>
</dbReference>
<dbReference type="GO" id="GO:0009507">
    <property type="term" value="C:chloroplast"/>
    <property type="evidence" value="ECO:0000314"/>
    <property type="project" value="CACAO"/>
</dbReference>
<dbReference type="GO" id="GO:0005829">
    <property type="term" value="C:cytosol"/>
    <property type="evidence" value="ECO:0007005"/>
    <property type="project" value="TAIR"/>
</dbReference>
<dbReference type="GO" id="GO:0005739">
    <property type="term" value="C:mitochondrion"/>
    <property type="evidence" value="ECO:0000314"/>
    <property type="project" value="CACAO"/>
</dbReference>
<dbReference type="GO" id="GO:0008199">
    <property type="term" value="F:ferric iron binding"/>
    <property type="evidence" value="ECO:0007669"/>
    <property type="project" value="InterPro"/>
</dbReference>
<dbReference type="GO" id="GO:0004322">
    <property type="term" value="F:ferroxidase activity"/>
    <property type="evidence" value="ECO:0007669"/>
    <property type="project" value="UniProtKB-EC"/>
</dbReference>
<dbReference type="GO" id="GO:0009060">
    <property type="term" value="P:aerobic respiration"/>
    <property type="evidence" value="ECO:0000315"/>
    <property type="project" value="TAIR"/>
</dbReference>
<dbReference type="GO" id="GO:0009793">
    <property type="term" value="P:embryo development ending in seed dormancy"/>
    <property type="evidence" value="ECO:0000315"/>
    <property type="project" value="TAIR"/>
</dbReference>
<dbReference type="GO" id="GO:0006783">
    <property type="term" value="P:heme biosynthetic process"/>
    <property type="evidence" value="ECO:0007669"/>
    <property type="project" value="UniProtKB-KW"/>
</dbReference>
<dbReference type="GO" id="GO:0006879">
    <property type="term" value="P:intracellular iron ion homeostasis"/>
    <property type="evidence" value="ECO:0007669"/>
    <property type="project" value="UniProtKB-KW"/>
</dbReference>
<dbReference type="GO" id="GO:0006826">
    <property type="term" value="P:iron ion transport"/>
    <property type="evidence" value="ECO:0007669"/>
    <property type="project" value="UniProtKB-KW"/>
</dbReference>
<dbReference type="GO" id="GO:0016226">
    <property type="term" value="P:iron-sulfur cluster assembly"/>
    <property type="evidence" value="ECO:0007669"/>
    <property type="project" value="InterPro"/>
</dbReference>
<dbReference type="GO" id="GO:1903329">
    <property type="term" value="P:regulation of iron-sulfur cluster assembly"/>
    <property type="evidence" value="ECO:0000315"/>
    <property type="project" value="TAIR"/>
</dbReference>
<dbReference type="GO" id="GO:0042542">
    <property type="term" value="P:response to hydrogen peroxide"/>
    <property type="evidence" value="ECO:0000315"/>
    <property type="project" value="TAIR"/>
</dbReference>
<dbReference type="GO" id="GO:0006979">
    <property type="term" value="P:response to oxidative stress"/>
    <property type="evidence" value="ECO:0000315"/>
    <property type="project" value="TAIR"/>
</dbReference>
<dbReference type="CDD" id="cd00503">
    <property type="entry name" value="Frataxin"/>
    <property type="match status" value="1"/>
</dbReference>
<dbReference type="FunFam" id="3.30.920.10:FF:000003">
    <property type="entry name" value="Frataxin, mitochondrial"/>
    <property type="match status" value="1"/>
</dbReference>
<dbReference type="Gene3D" id="3.30.920.10">
    <property type="entry name" value="Frataxin/CyaY"/>
    <property type="match status" value="1"/>
</dbReference>
<dbReference type="InterPro" id="IPR017789">
    <property type="entry name" value="Frataxin"/>
</dbReference>
<dbReference type="InterPro" id="IPR002908">
    <property type="entry name" value="Frataxin/CyaY"/>
</dbReference>
<dbReference type="InterPro" id="IPR036524">
    <property type="entry name" value="Frataxin/CyaY_sf"/>
</dbReference>
<dbReference type="InterPro" id="IPR020895">
    <property type="entry name" value="Frataxin_CS"/>
</dbReference>
<dbReference type="NCBIfam" id="TIGR03421">
    <property type="entry name" value="FeS_CyaY"/>
    <property type="match status" value="1"/>
</dbReference>
<dbReference type="NCBIfam" id="TIGR03422">
    <property type="entry name" value="mito_frataxin"/>
    <property type="match status" value="1"/>
</dbReference>
<dbReference type="PANTHER" id="PTHR16821">
    <property type="entry name" value="FRATAXIN"/>
    <property type="match status" value="1"/>
</dbReference>
<dbReference type="PANTHER" id="PTHR16821:SF2">
    <property type="entry name" value="FRATAXIN, MITOCHONDRIAL"/>
    <property type="match status" value="1"/>
</dbReference>
<dbReference type="Pfam" id="PF01491">
    <property type="entry name" value="Frataxin_Cyay"/>
    <property type="match status" value="1"/>
</dbReference>
<dbReference type="SMART" id="SM01219">
    <property type="entry name" value="Frataxin_Cyay"/>
    <property type="match status" value="1"/>
</dbReference>
<dbReference type="SUPFAM" id="SSF55387">
    <property type="entry name" value="Frataxin/Nqo15-like"/>
    <property type="match status" value="1"/>
</dbReference>
<dbReference type="PROSITE" id="PS01344">
    <property type="entry name" value="FRATAXIN_1"/>
    <property type="match status" value="1"/>
</dbReference>
<dbReference type="PROSITE" id="PS50810">
    <property type="entry name" value="FRATAXIN_2"/>
    <property type="match status" value="1"/>
</dbReference>
<feature type="transit peptide" description="Mitochondrion" evidence="2">
    <location>
        <begin position="1"/>
        <end status="unknown"/>
    </location>
</feature>
<feature type="chain" id="PRO_0000193926" description="Frataxin, mitochondrial">
    <location>
        <begin status="unknown"/>
        <end position="187"/>
    </location>
</feature>
<keyword id="KW-0002">3D-structure</keyword>
<keyword id="KW-0350">Heme biosynthesis</keyword>
<keyword id="KW-0406">Ion transport</keyword>
<keyword id="KW-0408">Iron</keyword>
<keyword id="KW-0409">Iron storage</keyword>
<keyword id="KW-0410">Iron transport</keyword>
<keyword id="KW-0496">Mitochondrion</keyword>
<keyword id="KW-0560">Oxidoreductase</keyword>
<keyword id="KW-1185">Reference proteome</keyword>
<keyword id="KW-0809">Transit peptide</keyword>
<keyword id="KW-0813">Transport</keyword>
<name>FRDA_ARATH</name>